<name>IQCF1_HUMAN</name>
<proteinExistence type="evidence at protein level"/>
<keyword id="KW-0025">Alternative splicing</keyword>
<keyword id="KW-0968">Cytoplasmic vesicle</keyword>
<keyword id="KW-1267">Proteomics identification</keyword>
<keyword id="KW-1185">Reference proteome</keyword>
<keyword id="KW-0677">Repeat</keyword>
<dbReference type="EMBL" id="AC097636">
    <property type="status" value="NOT_ANNOTATED_CDS"/>
    <property type="molecule type" value="Genomic_DNA"/>
</dbReference>
<dbReference type="EMBL" id="BC029595">
    <property type="protein sequence ID" value="AAH29595.1"/>
    <property type="molecule type" value="mRNA"/>
</dbReference>
<dbReference type="EMBL" id="BC034228">
    <property type="protein sequence ID" value="AAH34228.1"/>
    <property type="molecule type" value="mRNA"/>
</dbReference>
<dbReference type="CCDS" id="CCDS2836.1">
    <molecule id="Q8N6M8-1"/>
</dbReference>
<dbReference type="RefSeq" id="NP_689610.2">
    <molecule id="Q8N6M8-1"/>
    <property type="nucleotide sequence ID" value="NM_152397.3"/>
</dbReference>
<dbReference type="BioGRID" id="126306">
    <property type="interactions" value="50"/>
</dbReference>
<dbReference type="FunCoup" id="Q8N6M8">
    <property type="interactions" value="30"/>
</dbReference>
<dbReference type="IntAct" id="Q8N6M8">
    <property type="interactions" value="44"/>
</dbReference>
<dbReference type="STRING" id="9606.ENSP00000307958"/>
<dbReference type="GlyGen" id="Q8N6M8">
    <property type="glycosylation" value="1 site, 1 O-linked glycan (1 site)"/>
</dbReference>
<dbReference type="iPTMnet" id="Q8N6M8"/>
<dbReference type="PhosphoSitePlus" id="Q8N6M8"/>
<dbReference type="BioMuta" id="IQCF1"/>
<dbReference type="DMDM" id="229462886"/>
<dbReference type="MassIVE" id="Q8N6M8"/>
<dbReference type="PaxDb" id="9606-ENSP00000307958"/>
<dbReference type="PeptideAtlas" id="Q8N6M8"/>
<dbReference type="ProteomicsDB" id="72199">
    <molecule id="Q8N6M8-1"/>
</dbReference>
<dbReference type="ProteomicsDB" id="72200">
    <molecule id="Q8N6M8-2"/>
</dbReference>
<dbReference type="Antibodypedia" id="31058">
    <property type="antibodies" value="114 antibodies from 19 providers"/>
</dbReference>
<dbReference type="DNASU" id="132141"/>
<dbReference type="Ensembl" id="ENST00000310914.10">
    <molecule id="Q8N6M8-1"/>
    <property type="protein sequence ID" value="ENSP00000307958.5"/>
    <property type="gene ID" value="ENSG00000173389.16"/>
</dbReference>
<dbReference type="GeneID" id="132141"/>
<dbReference type="KEGG" id="hsa:132141"/>
<dbReference type="MANE-Select" id="ENST00000310914.10">
    <property type="protein sequence ID" value="ENSP00000307958.5"/>
    <property type="RefSeq nucleotide sequence ID" value="NM_152397.3"/>
    <property type="RefSeq protein sequence ID" value="NP_689610.2"/>
</dbReference>
<dbReference type="UCSC" id="uc003dbv.4">
    <molecule id="Q8N6M8-1"/>
    <property type="organism name" value="human"/>
</dbReference>
<dbReference type="AGR" id="HGNC:28607"/>
<dbReference type="CTD" id="132141"/>
<dbReference type="GeneCards" id="IQCF1"/>
<dbReference type="HGNC" id="HGNC:28607">
    <property type="gene designation" value="IQCF1"/>
</dbReference>
<dbReference type="HPA" id="ENSG00000173389">
    <property type="expression patterns" value="Tissue enriched (testis)"/>
</dbReference>
<dbReference type="neXtProt" id="NX_Q8N6M8"/>
<dbReference type="OpenTargets" id="ENSG00000173389"/>
<dbReference type="PharmGKB" id="PA134895829"/>
<dbReference type="VEuPathDB" id="HostDB:ENSG00000173389"/>
<dbReference type="eggNOG" id="ENOG502SR3N">
    <property type="taxonomic scope" value="Eukaryota"/>
</dbReference>
<dbReference type="GeneTree" id="ENSGT00390000004641"/>
<dbReference type="HOGENOM" id="CLU_114989_0_0_1"/>
<dbReference type="InParanoid" id="Q8N6M8"/>
<dbReference type="OMA" id="TECIPFS"/>
<dbReference type="OrthoDB" id="9803391at2759"/>
<dbReference type="PAN-GO" id="Q8N6M8">
    <property type="GO annotations" value="3 GO annotations based on evolutionary models"/>
</dbReference>
<dbReference type="PhylomeDB" id="Q8N6M8"/>
<dbReference type="TreeFam" id="TF337908"/>
<dbReference type="PathwayCommons" id="Q8N6M8"/>
<dbReference type="SignaLink" id="Q8N6M8"/>
<dbReference type="BioGRID-ORCS" id="132141">
    <property type="hits" value="8 hits in 1136 CRISPR screens"/>
</dbReference>
<dbReference type="GenomeRNAi" id="132141"/>
<dbReference type="Pharos" id="Q8N6M8">
    <property type="development level" value="Tdark"/>
</dbReference>
<dbReference type="PRO" id="PR:Q8N6M8"/>
<dbReference type="Proteomes" id="UP000005640">
    <property type="component" value="Chromosome 3"/>
</dbReference>
<dbReference type="RNAct" id="Q8N6M8">
    <property type="molecule type" value="protein"/>
</dbReference>
<dbReference type="Bgee" id="ENSG00000173389">
    <property type="expression patterns" value="Expressed in sperm and 76 other cell types or tissues"/>
</dbReference>
<dbReference type="ExpressionAtlas" id="Q8N6M8">
    <property type="expression patterns" value="baseline and differential"/>
</dbReference>
<dbReference type="GO" id="GO:0001669">
    <property type="term" value="C:acrosomal vesicle"/>
    <property type="evidence" value="ECO:0000314"/>
    <property type="project" value="UniProtKB"/>
</dbReference>
<dbReference type="GO" id="GO:0005516">
    <property type="term" value="F:calmodulin binding"/>
    <property type="evidence" value="ECO:0000318"/>
    <property type="project" value="GO_Central"/>
</dbReference>
<dbReference type="GO" id="GO:2000344">
    <property type="term" value="P:positive regulation of acrosome reaction"/>
    <property type="evidence" value="ECO:0000250"/>
    <property type="project" value="UniProtKB"/>
</dbReference>
<dbReference type="GO" id="GO:0060474">
    <property type="term" value="P:positive regulation of flagellated sperm motility involved in capacitation"/>
    <property type="evidence" value="ECO:0000250"/>
    <property type="project" value="UniProtKB"/>
</dbReference>
<dbReference type="FunFam" id="1.20.5.190:FF:000014">
    <property type="entry name" value="IQ motif containing F5"/>
    <property type="match status" value="1"/>
</dbReference>
<dbReference type="FunFam" id="1.20.5.190:FF:000015">
    <property type="entry name" value="IQ motif containing F5"/>
    <property type="match status" value="1"/>
</dbReference>
<dbReference type="Gene3D" id="1.20.5.190">
    <property type="match status" value="2"/>
</dbReference>
<dbReference type="InterPro" id="IPR000048">
    <property type="entry name" value="IQ_motif_EF-hand-BS"/>
</dbReference>
<dbReference type="InterPro" id="IPR039887">
    <property type="entry name" value="IQCF"/>
</dbReference>
<dbReference type="PANTHER" id="PTHR21633:SF14">
    <property type="entry name" value="IQ DOMAIN-CONTAINING PROTEIN F1"/>
    <property type="match status" value="1"/>
</dbReference>
<dbReference type="PANTHER" id="PTHR21633">
    <property type="entry name" value="IQ MOTIF CONTAINING F"/>
    <property type="match status" value="1"/>
</dbReference>
<dbReference type="Pfam" id="PF00612">
    <property type="entry name" value="IQ"/>
    <property type="match status" value="2"/>
</dbReference>
<dbReference type="SMART" id="SM00015">
    <property type="entry name" value="IQ"/>
    <property type="match status" value="2"/>
</dbReference>
<dbReference type="PROSITE" id="PS50096">
    <property type="entry name" value="IQ"/>
    <property type="match status" value="2"/>
</dbReference>
<gene>
    <name evidence="8" type="primary">IQCF1</name>
</gene>
<accession>Q8N6M8</accession>
<accession>Q8N711</accession>
<organism>
    <name type="scientific">Homo sapiens</name>
    <name type="common">Human</name>
    <dbReference type="NCBI Taxonomy" id="9606"/>
    <lineage>
        <taxon>Eukaryota</taxon>
        <taxon>Metazoa</taxon>
        <taxon>Chordata</taxon>
        <taxon>Craniata</taxon>
        <taxon>Vertebrata</taxon>
        <taxon>Euteleostomi</taxon>
        <taxon>Mammalia</taxon>
        <taxon>Eutheria</taxon>
        <taxon>Euarchontoglires</taxon>
        <taxon>Primates</taxon>
        <taxon>Haplorrhini</taxon>
        <taxon>Catarrhini</taxon>
        <taxon>Hominidae</taxon>
        <taxon>Homo</taxon>
    </lineage>
</organism>
<sequence length="205" mass="23699">MEEKQPQKTKEPSKEDEPQQKEMPTHLSLGAESKAEAKTPVLVETQTVDNANEKSEKPPENQKKLSDKDTVATKIQAWWRGTLVRRALLHAALSACIIQCWWRLILSKILKKRRQAALEAFSRKEWAAVTLQSQARMWRIRRRYCQVLNAVRIIQAYWRCRSCASRGFIKGQYRVTANQLHLQLEILLDSGPCIVTECIPFSIKE</sequence>
<comment type="function">
    <text evidence="1">Involved in sperm capacitation and acrosome reaction.</text>
</comment>
<comment type="subunit">
    <text evidence="1">Interacts with calmodulin.</text>
</comment>
<comment type="interaction">
    <interactant intactId="EBI-21771049">
        <id>Q8N6M8-2</id>
    </interactant>
    <interactant intactId="EBI-718729">
        <id>P55212</id>
        <label>CASP6</label>
    </interactant>
    <organismsDiffer>false</organismsDiffer>
    <experiments>3</experiments>
</comment>
<comment type="interaction">
    <interactant intactId="EBI-21771049">
        <id>Q8N6M8-2</id>
    </interactant>
    <interactant intactId="EBI-21591415">
        <id>P13473-2</id>
        <label>LAMP2</label>
    </interactant>
    <organismsDiffer>false</organismsDiffer>
    <experiments>3</experiments>
</comment>
<comment type="subcellular location">
    <subcellularLocation>
        <location evidence="5">Cytoplasmic vesicle</location>
        <location evidence="5">Secretory vesicle</location>
        <location evidence="5">Acrosome</location>
    </subcellularLocation>
</comment>
<comment type="alternative products">
    <event type="alternative splicing"/>
    <isoform>
        <id>Q8N6M8-1</id>
        <name>1</name>
        <sequence type="displayed"/>
    </isoform>
    <isoform>
        <id>Q8N6M8-2</id>
        <name>2</name>
        <sequence type="described" ref="VSP_024184 VSP_024185"/>
    </isoform>
</comment>
<protein>
    <recommendedName>
        <fullName evidence="7">IQ domain-containing protein F1</fullName>
    </recommendedName>
</protein>
<evidence type="ECO:0000250" key="1">
    <source>
        <dbReference type="UniProtKB" id="Q9D9K8"/>
    </source>
</evidence>
<evidence type="ECO:0000255" key="2">
    <source>
        <dbReference type="PROSITE-ProRule" id="PRU00116"/>
    </source>
</evidence>
<evidence type="ECO:0000256" key="3">
    <source>
        <dbReference type="SAM" id="MobiDB-lite"/>
    </source>
</evidence>
<evidence type="ECO:0000269" key="4">
    <source>
    </source>
</evidence>
<evidence type="ECO:0000269" key="5">
    <source>
    </source>
</evidence>
<evidence type="ECO:0000303" key="6">
    <source>
    </source>
</evidence>
<evidence type="ECO:0000305" key="7"/>
<evidence type="ECO:0000312" key="8">
    <source>
        <dbReference type="HGNC" id="HGNC:28607"/>
    </source>
</evidence>
<reference key="1">
    <citation type="journal article" date="2006" name="Nature">
        <title>The DNA sequence, annotation and analysis of human chromosome 3.</title>
        <authorList>
            <person name="Muzny D.M."/>
            <person name="Scherer S.E."/>
            <person name="Kaul R."/>
            <person name="Wang J."/>
            <person name="Yu J."/>
            <person name="Sudbrak R."/>
            <person name="Buhay C.J."/>
            <person name="Chen R."/>
            <person name="Cree A."/>
            <person name="Ding Y."/>
            <person name="Dugan-Rocha S."/>
            <person name="Gill R."/>
            <person name="Gunaratne P."/>
            <person name="Harris R.A."/>
            <person name="Hawes A.C."/>
            <person name="Hernandez J."/>
            <person name="Hodgson A.V."/>
            <person name="Hume J."/>
            <person name="Jackson A."/>
            <person name="Khan Z.M."/>
            <person name="Kovar-Smith C."/>
            <person name="Lewis L.R."/>
            <person name="Lozado R.J."/>
            <person name="Metzker M.L."/>
            <person name="Milosavljevic A."/>
            <person name="Miner G.R."/>
            <person name="Morgan M.B."/>
            <person name="Nazareth L.V."/>
            <person name="Scott G."/>
            <person name="Sodergren E."/>
            <person name="Song X.-Z."/>
            <person name="Steffen D."/>
            <person name="Wei S."/>
            <person name="Wheeler D.A."/>
            <person name="Wright M.W."/>
            <person name="Worley K.C."/>
            <person name="Yuan Y."/>
            <person name="Zhang Z."/>
            <person name="Adams C.Q."/>
            <person name="Ansari-Lari M.A."/>
            <person name="Ayele M."/>
            <person name="Brown M.J."/>
            <person name="Chen G."/>
            <person name="Chen Z."/>
            <person name="Clendenning J."/>
            <person name="Clerc-Blankenburg K.P."/>
            <person name="Chen R."/>
            <person name="Chen Z."/>
            <person name="Davis C."/>
            <person name="Delgado O."/>
            <person name="Dinh H.H."/>
            <person name="Dong W."/>
            <person name="Draper H."/>
            <person name="Ernst S."/>
            <person name="Fu G."/>
            <person name="Gonzalez-Garay M.L."/>
            <person name="Garcia D.K."/>
            <person name="Gillett W."/>
            <person name="Gu J."/>
            <person name="Hao B."/>
            <person name="Haugen E."/>
            <person name="Havlak P."/>
            <person name="He X."/>
            <person name="Hennig S."/>
            <person name="Hu S."/>
            <person name="Huang W."/>
            <person name="Jackson L.R."/>
            <person name="Jacob L.S."/>
            <person name="Kelly S.H."/>
            <person name="Kube M."/>
            <person name="Levy R."/>
            <person name="Li Z."/>
            <person name="Liu B."/>
            <person name="Liu J."/>
            <person name="Liu W."/>
            <person name="Lu J."/>
            <person name="Maheshwari M."/>
            <person name="Nguyen B.-V."/>
            <person name="Okwuonu G.O."/>
            <person name="Palmeiri A."/>
            <person name="Pasternak S."/>
            <person name="Perez L.M."/>
            <person name="Phelps K.A."/>
            <person name="Plopper F.J."/>
            <person name="Qiang B."/>
            <person name="Raymond C."/>
            <person name="Rodriguez R."/>
            <person name="Saenphimmachak C."/>
            <person name="Santibanez J."/>
            <person name="Shen H."/>
            <person name="Shen Y."/>
            <person name="Subramanian S."/>
            <person name="Tabor P.E."/>
            <person name="Verduzco D."/>
            <person name="Waldron L."/>
            <person name="Wang J."/>
            <person name="Wang J."/>
            <person name="Wang Q."/>
            <person name="Williams G.A."/>
            <person name="Wong G.K.-S."/>
            <person name="Yao Z."/>
            <person name="Zhang J."/>
            <person name="Zhang X."/>
            <person name="Zhao G."/>
            <person name="Zhou J."/>
            <person name="Zhou Y."/>
            <person name="Nelson D."/>
            <person name="Lehrach H."/>
            <person name="Reinhardt R."/>
            <person name="Naylor S.L."/>
            <person name="Yang H."/>
            <person name="Olson M."/>
            <person name="Weinstock G."/>
            <person name="Gibbs R.A."/>
        </authorList>
    </citation>
    <scope>NUCLEOTIDE SEQUENCE [LARGE SCALE GENOMIC DNA]</scope>
</reference>
<reference key="2">
    <citation type="journal article" date="2004" name="Genome Res.">
        <title>The status, quality, and expansion of the NIH full-length cDNA project: the Mammalian Gene Collection (MGC).</title>
        <authorList>
            <consortium name="The MGC Project Team"/>
        </authorList>
    </citation>
    <scope>NUCLEOTIDE SEQUENCE [LARGE SCALE MRNA] (ISOFORMS 1 AND 2)</scope>
    <scope>VARIANT LYS-76</scope>
    <source>
        <tissue>Brain</tissue>
        <tissue>Testis</tissue>
    </source>
</reference>
<reference key="3">
    <citation type="journal article" date="2015" name="Andrology">
        <title>A novel acrosomal protein, IQCF1, involved in sperm capacitation and the acrosome reaction.</title>
        <authorList>
            <person name="Fang P."/>
            <person name="Xu W."/>
            <person name="Li D."/>
            <person name="Zhao X."/>
            <person name="Dai J."/>
            <person name="Wang Z."/>
            <person name="Yan X."/>
            <person name="Qin M."/>
            <person name="Zhang Y."/>
            <person name="Xu C."/>
            <person name="Wang L."/>
            <person name="Qiao Z."/>
        </authorList>
    </citation>
    <scope>SUBCELLULAR LOCATION</scope>
</reference>
<feature type="chain" id="PRO_0000282556" description="IQ domain-containing protein F1">
    <location>
        <begin position="1"/>
        <end position="205"/>
    </location>
</feature>
<feature type="domain" description="IQ 1" evidence="2">
    <location>
        <begin position="68"/>
        <end position="97"/>
    </location>
</feature>
<feature type="domain" description="IQ 2" evidence="2">
    <location>
        <begin position="124"/>
        <end position="153"/>
    </location>
</feature>
<feature type="region of interest" description="Disordered" evidence="3">
    <location>
        <begin position="1"/>
        <end position="68"/>
    </location>
</feature>
<feature type="compositionally biased region" description="Basic and acidic residues" evidence="3">
    <location>
        <begin position="1"/>
        <end position="24"/>
    </location>
</feature>
<feature type="compositionally biased region" description="Basic and acidic residues" evidence="3">
    <location>
        <begin position="51"/>
        <end position="68"/>
    </location>
</feature>
<feature type="splice variant" id="VSP_024184" description="In isoform 2." evidence="6">
    <original>PPENQKKLSDKDTVATKIQAWWRG</original>
    <variation>VCQWNMVIVSMDWKSLESEDLRNL</variation>
    <location>
        <begin position="58"/>
        <end position="81"/>
    </location>
</feature>
<feature type="splice variant" id="VSP_024185" description="In isoform 2." evidence="6">
    <location>
        <begin position="82"/>
        <end position="205"/>
    </location>
</feature>
<feature type="sequence variant" id="VAR_055096" description="In dbSNP:rs17852683." evidence="4">
    <original>Q</original>
    <variation>K</variation>
    <location>
        <position position="76"/>
    </location>
</feature>
<feature type="sequence variant" id="VAR_031414" description="In dbSNP:rs11927897.">
    <original>R</original>
    <variation>Q</variation>
    <location>
        <position position="114"/>
    </location>
</feature>